<sequence length="334" mass="37086">MSEFLTPERTVYDSGVQFLRPKSLDEFIGQENVKKKLSLALEAAKMRGEVLDHVLLAGPPGLGKTTLAHIIASELQTNIHVTSGPVLVKQGDMAAILTSLERGDVLFIDEIHRLNKAVEELLYSAIEDFQIDIMIGKGPSAKSIRIDIQPFTLVGATTRSGLLSSPLRSRFGIILELDFYTVKELKEIIKRAASLMDVEIEDSAAEMIAKRSRGTPRIAIRLTKRVRDMLTVVKADRINTDIVLKTMEVLNIDAEGLDEFDRKILKTIIEIYRGGPVGLNALAASLGVEADTLSEVYEPYLLQAGFLARTPRGRVATEKAYKHLKYEVPENRLF</sequence>
<evidence type="ECO:0000255" key="1">
    <source>
        <dbReference type="HAMAP-Rule" id="MF_00016"/>
    </source>
</evidence>
<dbReference type="EC" id="3.6.4.-" evidence="1"/>
<dbReference type="EMBL" id="CP000969">
    <property type="protein sequence ID" value="ACB09441.1"/>
    <property type="molecule type" value="Genomic_DNA"/>
</dbReference>
<dbReference type="RefSeq" id="WP_011943578.1">
    <property type="nucleotide sequence ID" value="NC_010483.1"/>
</dbReference>
<dbReference type="SMR" id="B1LAU3"/>
<dbReference type="KEGG" id="trq:TRQ2_1095"/>
<dbReference type="HOGENOM" id="CLU_055599_1_0_0"/>
<dbReference type="Proteomes" id="UP000001687">
    <property type="component" value="Chromosome"/>
</dbReference>
<dbReference type="GO" id="GO:0005737">
    <property type="term" value="C:cytoplasm"/>
    <property type="evidence" value="ECO:0007669"/>
    <property type="project" value="UniProtKB-SubCell"/>
</dbReference>
<dbReference type="GO" id="GO:0048476">
    <property type="term" value="C:Holliday junction resolvase complex"/>
    <property type="evidence" value="ECO:0007669"/>
    <property type="project" value="UniProtKB-UniRule"/>
</dbReference>
<dbReference type="GO" id="GO:0005524">
    <property type="term" value="F:ATP binding"/>
    <property type="evidence" value="ECO:0007669"/>
    <property type="project" value="UniProtKB-UniRule"/>
</dbReference>
<dbReference type="GO" id="GO:0016887">
    <property type="term" value="F:ATP hydrolysis activity"/>
    <property type="evidence" value="ECO:0007669"/>
    <property type="project" value="InterPro"/>
</dbReference>
<dbReference type="GO" id="GO:0000400">
    <property type="term" value="F:four-way junction DNA binding"/>
    <property type="evidence" value="ECO:0007669"/>
    <property type="project" value="UniProtKB-UniRule"/>
</dbReference>
<dbReference type="GO" id="GO:0009378">
    <property type="term" value="F:four-way junction helicase activity"/>
    <property type="evidence" value="ECO:0007669"/>
    <property type="project" value="InterPro"/>
</dbReference>
<dbReference type="GO" id="GO:0006310">
    <property type="term" value="P:DNA recombination"/>
    <property type="evidence" value="ECO:0007669"/>
    <property type="project" value="UniProtKB-UniRule"/>
</dbReference>
<dbReference type="GO" id="GO:0006281">
    <property type="term" value="P:DNA repair"/>
    <property type="evidence" value="ECO:0007669"/>
    <property type="project" value="UniProtKB-UniRule"/>
</dbReference>
<dbReference type="CDD" id="cd00009">
    <property type="entry name" value="AAA"/>
    <property type="match status" value="1"/>
</dbReference>
<dbReference type="Gene3D" id="1.10.8.60">
    <property type="match status" value="1"/>
</dbReference>
<dbReference type="Gene3D" id="3.40.50.300">
    <property type="entry name" value="P-loop containing nucleotide triphosphate hydrolases"/>
    <property type="match status" value="1"/>
</dbReference>
<dbReference type="Gene3D" id="1.10.10.10">
    <property type="entry name" value="Winged helix-like DNA-binding domain superfamily/Winged helix DNA-binding domain"/>
    <property type="match status" value="1"/>
</dbReference>
<dbReference type="HAMAP" id="MF_00016">
    <property type="entry name" value="DNA_HJ_migration_RuvB"/>
    <property type="match status" value="1"/>
</dbReference>
<dbReference type="InterPro" id="IPR003593">
    <property type="entry name" value="AAA+_ATPase"/>
</dbReference>
<dbReference type="InterPro" id="IPR041445">
    <property type="entry name" value="AAA_lid_4"/>
</dbReference>
<dbReference type="InterPro" id="IPR004605">
    <property type="entry name" value="DNA_helicase_Holl-junc_RuvB"/>
</dbReference>
<dbReference type="InterPro" id="IPR027417">
    <property type="entry name" value="P-loop_NTPase"/>
</dbReference>
<dbReference type="InterPro" id="IPR008824">
    <property type="entry name" value="RuvB-like_N"/>
</dbReference>
<dbReference type="InterPro" id="IPR008823">
    <property type="entry name" value="RuvB_C"/>
</dbReference>
<dbReference type="InterPro" id="IPR036388">
    <property type="entry name" value="WH-like_DNA-bd_sf"/>
</dbReference>
<dbReference type="InterPro" id="IPR036390">
    <property type="entry name" value="WH_DNA-bd_sf"/>
</dbReference>
<dbReference type="NCBIfam" id="NF000868">
    <property type="entry name" value="PRK00080.1"/>
    <property type="match status" value="1"/>
</dbReference>
<dbReference type="NCBIfam" id="TIGR00635">
    <property type="entry name" value="ruvB"/>
    <property type="match status" value="1"/>
</dbReference>
<dbReference type="PANTHER" id="PTHR42848">
    <property type="match status" value="1"/>
</dbReference>
<dbReference type="PANTHER" id="PTHR42848:SF1">
    <property type="entry name" value="HOLLIDAY JUNCTION BRANCH MIGRATION COMPLEX SUBUNIT RUVB"/>
    <property type="match status" value="1"/>
</dbReference>
<dbReference type="Pfam" id="PF17864">
    <property type="entry name" value="AAA_lid_4"/>
    <property type="match status" value="1"/>
</dbReference>
<dbReference type="Pfam" id="PF05491">
    <property type="entry name" value="RuvB_C"/>
    <property type="match status" value="1"/>
</dbReference>
<dbReference type="Pfam" id="PF05496">
    <property type="entry name" value="RuvB_N"/>
    <property type="match status" value="1"/>
</dbReference>
<dbReference type="SMART" id="SM00382">
    <property type="entry name" value="AAA"/>
    <property type="match status" value="1"/>
</dbReference>
<dbReference type="SUPFAM" id="SSF52540">
    <property type="entry name" value="P-loop containing nucleoside triphosphate hydrolases"/>
    <property type="match status" value="1"/>
</dbReference>
<dbReference type="SUPFAM" id="SSF46785">
    <property type="entry name" value="Winged helix' DNA-binding domain"/>
    <property type="match status" value="1"/>
</dbReference>
<proteinExistence type="inferred from homology"/>
<comment type="function">
    <text evidence="1">The RuvA-RuvB-RuvC complex processes Holliday junction (HJ) DNA during genetic recombination and DNA repair, while the RuvA-RuvB complex plays an important role in the rescue of blocked DNA replication forks via replication fork reversal (RFR). RuvA specifically binds to HJ cruciform DNA, conferring on it an open structure. The RuvB hexamer acts as an ATP-dependent pump, pulling dsDNA into and through the RuvAB complex. RuvB forms 2 homohexamers on either side of HJ DNA bound by 1 or 2 RuvA tetramers; 4 subunits per hexamer contact DNA at a time. Coordinated motions by a converter formed by DNA-disengaged RuvB subunits stimulates ATP hydrolysis and nucleotide exchange. Immobilization of the converter enables RuvB to convert the ATP-contained energy into a lever motion, pulling 2 nucleotides of DNA out of the RuvA tetramer per ATP hydrolyzed, thus driving DNA branch migration. The RuvB motors rotate together with the DNA substrate, which together with the progressing nucleotide cycle form the mechanistic basis for DNA recombination by continuous HJ branch migration. Branch migration allows RuvC to scan DNA until it finds its consensus sequence, where it cleaves and resolves cruciform DNA.</text>
</comment>
<comment type="catalytic activity">
    <reaction evidence="1">
        <text>ATP + H2O = ADP + phosphate + H(+)</text>
        <dbReference type="Rhea" id="RHEA:13065"/>
        <dbReference type="ChEBI" id="CHEBI:15377"/>
        <dbReference type="ChEBI" id="CHEBI:15378"/>
        <dbReference type="ChEBI" id="CHEBI:30616"/>
        <dbReference type="ChEBI" id="CHEBI:43474"/>
        <dbReference type="ChEBI" id="CHEBI:456216"/>
    </reaction>
</comment>
<comment type="subunit">
    <text evidence="1">Homohexamer. Forms an RuvA(8)-RuvB(12)-Holliday junction (HJ) complex. HJ DNA is sandwiched between 2 RuvA tetramers; dsDNA enters through RuvA and exits via RuvB. An RuvB hexamer assembles on each DNA strand where it exits the tetramer. Each RuvB hexamer is contacted by two RuvA subunits (via domain III) on 2 adjacent RuvB subunits; this complex drives branch migration. In the full resolvosome a probable DNA-RuvA(4)-RuvB(12)-RuvC(2) complex forms which resolves the HJ.</text>
</comment>
<comment type="subcellular location">
    <subcellularLocation>
        <location evidence="1">Cytoplasm</location>
    </subcellularLocation>
</comment>
<comment type="domain">
    <text evidence="1">Has 3 domains, the large (RuvB-L) and small ATPase (RuvB-S) domains and the C-terminal head (RuvB-H) domain. The head domain binds DNA, while the ATPase domains jointly bind ATP, ADP or are empty depending on the state of the subunit in the translocation cycle. During a single DNA translocation step the structure of each domain remains the same, but their relative positions change.</text>
</comment>
<comment type="similarity">
    <text evidence="1">Belongs to the RuvB family.</text>
</comment>
<accession>B1LAU3</accession>
<organism>
    <name type="scientific">Thermotoga sp. (strain RQ2)</name>
    <dbReference type="NCBI Taxonomy" id="126740"/>
    <lineage>
        <taxon>Bacteria</taxon>
        <taxon>Thermotogati</taxon>
        <taxon>Thermotogota</taxon>
        <taxon>Thermotogae</taxon>
        <taxon>Thermotogales</taxon>
        <taxon>Thermotogaceae</taxon>
        <taxon>Thermotoga</taxon>
    </lineage>
</organism>
<feature type="chain" id="PRO_1000089690" description="Holliday junction branch migration complex subunit RuvB">
    <location>
        <begin position="1"/>
        <end position="334"/>
    </location>
</feature>
<feature type="region of interest" description="Large ATPase domain (RuvB-L)" evidence="1">
    <location>
        <begin position="1"/>
        <end position="180"/>
    </location>
</feature>
<feature type="region of interest" description="Small ATPAse domain (RuvB-S)" evidence="1">
    <location>
        <begin position="181"/>
        <end position="251"/>
    </location>
</feature>
<feature type="region of interest" description="Head domain (RuvB-H)" evidence="1">
    <location>
        <begin position="254"/>
        <end position="334"/>
    </location>
</feature>
<feature type="binding site" evidence="1">
    <location>
        <position position="19"/>
    </location>
    <ligand>
        <name>ATP</name>
        <dbReference type="ChEBI" id="CHEBI:30616"/>
    </ligand>
</feature>
<feature type="binding site" evidence="1">
    <location>
        <position position="20"/>
    </location>
    <ligand>
        <name>ATP</name>
        <dbReference type="ChEBI" id="CHEBI:30616"/>
    </ligand>
</feature>
<feature type="binding site" evidence="1">
    <location>
        <position position="61"/>
    </location>
    <ligand>
        <name>ATP</name>
        <dbReference type="ChEBI" id="CHEBI:30616"/>
    </ligand>
</feature>
<feature type="binding site" evidence="1">
    <location>
        <position position="64"/>
    </location>
    <ligand>
        <name>ATP</name>
        <dbReference type="ChEBI" id="CHEBI:30616"/>
    </ligand>
</feature>
<feature type="binding site" evidence="1">
    <location>
        <position position="65"/>
    </location>
    <ligand>
        <name>ATP</name>
        <dbReference type="ChEBI" id="CHEBI:30616"/>
    </ligand>
</feature>
<feature type="binding site" evidence="1">
    <location>
        <position position="65"/>
    </location>
    <ligand>
        <name>Mg(2+)</name>
        <dbReference type="ChEBI" id="CHEBI:18420"/>
    </ligand>
</feature>
<feature type="binding site" evidence="1">
    <location>
        <position position="66"/>
    </location>
    <ligand>
        <name>ATP</name>
        <dbReference type="ChEBI" id="CHEBI:30616"/>
    </ligand>
</feature>
<feature type="binding site" evidence="1">
    <location>
        <begin position="127"/>
        <end position="129"/>
    </location>
    <ligand>
        <name>ATP</name>
        <dbReference type="ChEBI" id="CHEBI:30616"/>
    </ligand>
</feature>
<feature type="binding site" evidence="1">
    <location>
        <position position="170"/>
    </location>
    <ligand>
        <name>ATP</name>
        <dbReference type="ChEBI" id="CHEBI:30616"/>
    </ligand>
</feature>
<feature type="binding site" evidence="1">
    <location>
        <position position="180"/>
    </location>
    <ligand>
        <name>ATP</name>
        <dbReference type="ChEBI" id="CHEBI:30616"/>
    </ligand>
</feature>
<feature type="binding site" evidence="1">
    <location>
        <position position="217"/>
    </location>
    <ligand>
        <name>ATP</name>
        <dbReference type="ChEBI" id="CHEBI:30616"/>
    </ligand>
</feature>
<feature type="binding site" evidence="1">
    <location>
        <position position="309"/>
    </location>
    <ligand>
        <name>DNA</name>
        <dbReference type="ChEBI" id="CHEBI:16991"/>
    </ligand>
</feature>
<feature type="binding site" evidence="1">
    <location>
        <position position="314"/>
    </location>
    <ligand>
        <name>DNA</name>
        <dbReference type="ChEBI" id="CHEBI:16991"/>
    </ligand>
</feature>
<reference key="1">
    <citation type="journal article" date="2011" name="J. Bacteriol.">
        <title>Genome sequence of Thermotoga sp. strain RQ2, a hyperthermophilic bacterium isolated from a geothermally heated region of the seafloor near Ribeira Quente, the Azores.</title>
        <authorList>
            <person name="Swithers K.S."/>
            <person name="DiPippo J.L."/>
            <person name="Bruce D.C."/>
            <person name="Detter C."/>
            <person name="Tapia R."/>
            <person name="Han S."/>
            <person name="Saunders E."/>
            <person name="Goodwin L.A."/>
            <person name="Han J."/>
            <person name="Woyke T."/>
            <person name="Pitluck S."/>
            <person name="Pennacchio L."/>
            <person name="Nolan M."/>
            <person name="Mikhailova N."/>
            <person name="Lykidis A."/>
            <person name="Land M.L."/>
            <person name="Brettin T."/>
            <person name="Stetter K.O."/>
            <person name="Nelson K.E."/>
            <person name="Gogarten J.P."/>
            <person name="Noll K.M."/>
        </authorList>
    </citation>
    <scope>NUCLEOTIDE SEQUENCE [LARGE SCALE GENOMIC DNA]</scope>
    <source>
        <strain>RQ2</strain>
    </source>
</reference>
<gene>
    <name evidence="1" type="primary">ruvB</name>
    <name type="ordered locus">TRQ2_1095</name>
</gene>
<protein>
    <recommendedName>
        <fullName evidence="1">Holliday junction branch migration complex subunit RuvB</fullName>
        <ecNumber evidence="1">3.6.4.-</ecNumber>
    </recommendedName>
</protein>
<name>RUVB_THESQ</name>
<keyword id="KW-0067">ATP-binding</keyword>
<keyword id="KW-0963">Cytoplasm</keyword>
<keyword id="KW-0227">DNA damage</keyword>
<keyword id="KW-0233">DNA recombination</keyword>
<keyword id="KW-0234">DNA repair</keyword>
<keyword id="KW-0238">DNA-binding</keyword>
<keyword id="KW-0378">Hydrolase</keyword>
<keyword id="KW-0547">Nucleotide-binding</keyword>